<reference key="1">
    <citation type="journal article" date="2010" name="Appl. Environ. Microbiol.">
        <title>Conserved symbiotic plasmid DNA sequences in the multireplicon pangenomic structure of Rhizobium etli.</title>
        <authorList>
            <person name="Gonzalez V."/>
            <person name="Acosta J.L."/>
            <person name="Santamaria R.I."/>
            <person name="Bustos P."/>
            <person name="Fernandez J.L."/>
            <person name="Hernandez Gonzalez I.L."/>
            <person name="Diaz R."/>
            <person name="Flores M."/>
            <person name="Palacios R."/>
            <person name="Mora J."/>
            <person name="Davila G."/>
        </authorList>
    </citation>
    <scope>NUCLEOTIDE SEQUENCE [LARGE SCALE GENOMIC DNA]</scope>
    <source>
        <strain>CIAT 652</strain>
    </source>
</reference>
<feature type="chain" id="PRO_1000137275" description="Acetyl-coenzyme A synthetase">
    <location>
        <begin position="1"/>
        <end position="651"/>
    </location>
</feature>
<feature type="binding site" evidence="1">
    <location>
        <begin position="189"/>
        <end position="192"/>
    </location>
    <ligand>
        <name>CoA</name>
        <dbReference type="ChEBI" id="CHEBI:57287"/>
    </ligand>
</feature>
<feature type="binding site" evidence="1">
    <location>
        <position position="311"/>
    </location>
    <ligand>
        <name>CoA</name>
        <dbReference type="ChEBI" id="CHEBI:57287"/>
    </ligand>
</feature>
<feature type="binding site" evidence="1">
    <location>
        <position position="335"/>
    </location>
    <ligand>
        <name>CoA</name>
        <dbReference type="ChEBI" id="CHEBI:57287"/>
    </ligand>
</feature>
<feature type="binding site" evidence="1">
    <location>
        <begin position="387"/>
        <end position="389"/>
    </location>
    <ligand>
        <name>ATP</name>
        <dbReference type="ChEBI" id="CHEBI:30616"/>
    </ligand>
</feature>
<feature type="binding site" evidence="1">
    <location>
        <begin position="411"/>
        <end position="416"/>
    </location>
    <ligand>
        <name>ATP</name>
        <dbReference type="ChEBI" id="CHEBI:30616"/>
    </ligand>
</feature>
<feature type="binding site" evidence="1">
    <location>
        <position position="500"/>
    </location>
    <ligand>
        <name>ATP</name>
        <dbReference type="ChEBI" id="CHEBI:30616"/>
    </ligand>
</feature>
<feature type="binding site" evidence="1">
    <location>
        <position position="515"/>
    </location>
    <ligand>
        <name>ATP</name>
        <dbReference type="ChEBI" id="CHEBI:30616"/>
    </ligand>
</feature>
<feature type="binding site" evidence="1">
    <location>
        <position position="523"/>
    </location>
    <ligand>
        <name>CoA</name>
        <dbReference type="ChEBI" id="CHEBI:57287"/>
    </ligand>
</feature>
<feature type="binding site" evidence="1">
    <location>
        <position position="526"/>
    </location>
    <ligand>
        <name>ATP</name>
        <dbReference type="ChEBI" id="CHEBI:30616"/>
    </ligand>
</feature>
<feature type="binding site" evidence="1">
    <location>
        <position position="537"/>
    </location>
    <ligand>
        <name>Mg(2+)</name>
        <dbReference type="ChEBI" id="CHEBI:18420"/>
    </ligand>
</feature>
<feature type="binding site" evidence="1">
    <location>
        <position position="539"/>
    </location>
    <ligand>
        <name>Mg(2+)</name>
        <dbReference type="ChEBI" id="CHEBI:18420"/>
    </ligand>
</feature>
<feature type="binding site" evidence="1">
    <location>
        <position position="542"/>
    </location>
    <ligand>
        <name>Mg(2+)</name>
        <dbReference type="ChEBI" id="CHEBI:18420"/>
    </ligand>
</feature>
<feature type="binding site" evidence="1">
    <location>
        <position position="584"/>
    </location>
    <ligand>
        <name>CoA</name>
        <dbReference type="ChEBI" id="CHEBI:57287"/>
    </ligand>
</feature>
<feature type="modified residue" description="N6-acetyllysine" evidence="1">
    <location>
        <position position="609"/>
    </location>
</feature>
<accession>B3PS41</accession>
<keyword id="KW-0007">Acetylation</keyword>
<keyword id="KW-0067">ATP-binding</keyword>
<keyword id="KW-0436">Ligase</keyword>
<keyword id="KW-0460">Magnesium</keyword>
<keyword id="KW-0479">Metal-binding</keyword>
<keyword id="KW-0547">Nucleotide-binding</keyword>
<protein>
    <recommendedName>
        <fullName evidence="1">Acetyl-coenzyme A synthetase</fullName>
        <shortName evidence="1">AcCoA synthetase</shortName>
        <shortName evidence="1">Acs</shortName>
        <ecNumber evidence="1">6.2.1.1</ecNumber>
    </recommendedName>
    <alternativeName>
        <fullName evidence="1">Acetate--CoA ligase</fullName>
    </alternativeName>
    <alternativeName>
        <fullName evidence="1">Acyl-activating enzyme</fullName>
    </alternativeName>
</protein>
<dbReference type="EC" id="6.2.1.1" evidence="1"/>
<dbReference type="EMBL" id="CP001074">
    <property type="protein sequence ID" value="ACE93331.1"/>
    <property type="molecule type" value="Genomic_DNA"/>
</dbReference>
<dbReference type="SMR" id="B3PS41"/>
<dbReference type="KEGG" id="rec:RHECIAT_CH0004404"/>
<dbReference type="eggNOG" id="COG0365">
    <property type="taxonomic scope" value="Bacteria"/>
</dbReference>
<dbReference type="HOGENOM" id="CLU_000022_3_6_5"/>
<dbReference type="Proteomes" id="UP000008817">
    <property type="component" value="Chromosome"/>
</dbReference>
<dbReference type="GO" id="GO:0005829">
    <property type="term" value="C:cytosol"/>
    <property type="evidence" value="ECO:0007669"/>
    <property type="project" value="TreeGrafter"/>
</dbReference>
<dbReference type="GO" id="GO:0003987">
    <property type="term" value="F:acetate-CoA ligase activity"/>
    <property type="evidence" value="ECO:0007669"/>
    <property type="project" value="UniProtKB-UniRule"/>
</dbReference>
<dbReference type="GO" id="GO:0016208">
    <property type="term" value="F:AMP binding"/>
    <property type="evidence" value="ECO:0007669"/>
    <property type="project" value="InterPro"/>
</dbReference>
<dbReference type="GO" id="GO:0005524">
    <property type="term" value="F:ATP binding"/>
    <property type="evidence" value="ECO:0007669"/>
    <property type="project" value="UniProtKB-KW"/>
</dbReference>
<dbReference type="GO" id="GO:0046872">
    <property type="term" value="F:metal ion binding"/>
    <property type="evidence" value="ECO:0007669"/>
    <property type="project" value="UniProtKB-KW"/>
</dbReference>
<dbReference type="GO" id="GO:0019427">
    <property type="term" value="P:acetyl-CoA biosynthetic process from acetate"/>
    <property type="evidence" value="ECO:0007669"/>
    <property type="project" value="InterPro"/>
</dbReference>
<dbReference type="CDD" id="cd05966">
    <property type="entry name" value="ACS"/>
    <property type="match status" value="1"/>
</dbReference>
<dbReference type="FunFam" id="3.30.300.30:FF:000004">
    <property type="entry name" value="Acetyl-coenzyme A synthetase"/>
    <property type="match status" value="1"/>
</dbReference>
<dbReference type="FunFam" id="3.40.50.12780:FF:000001">
    <property type="entry name" value="Acetyl-coenzyme A synthetase"/>
    <property type="match status" value="1"/>
</dbReference>
<dbReference type="Gene3D" id="3.30.300.30">
    <property type="match status" value="1"/>
</dbReference>
<dbReference type="Gene3D" id="3.40.50.12780">
    <property type="entry name" value="N-terminal domain of ligase-like"/>
    <property type="match status" value="1"/>
</dbReference>
<dbReference type="HAMAP" id="MF_01123">
    <property type="entry name" value="Ac_CoA_synth"/>
    <property type="match status" value="1"/>
</dbReference>
<dbReference type="InterPro" id="IPR011904">
    <property type="entry name" value="Ac_CoA_lig"/>
</dbReference>
<dbReference type="InterPro" id="IPR032387">
    <property type="entry name" value="ACAS_N"/>
</dbReference>
<dbReference type="InterPro" id="IPR025110">
    <property type="entry name" value="AMP-bd_C"/>
</dbReference>
<dbReference type="InterPro" id="IPR045851">
    <property type="entry name" value="AMP-bd_C_sf"/>
</dbReference>
<dbReference type="InterPro" id="IPR020845">
    <property type="entry name" value="AMP-binding_CS"/>
</dbReference>
<dbReference type="InterPro" id="IPR000873">
    <property type="entry name" value="AMP-dep_synth/lig_dom"/>
</dbReference>
<dbReference type="InterPro" id="IPR042099">
    <property type="entry name" value="ANL_N_sf"/>
</dbReference>
<dbReference type="NCBIfam" id="TIGR02188">
    <property type="entry name" value="Ac_CoA_lig_AcsA"/>
    <property type="match status" value="1"/>
</dbReference>
<dbReference type="NCBIfam" id="NF001208">
    <property type="entry name" value="PRK00174.1"/>
    <property type="match status" value="1"/>
</dbReference>
<dbReference type="PANTHER" id="PTHR24095">
    <property type="entry name" value="ACETYL-COENZYME A SYNTHETASE"/>
    <property type="match status" value="1"/>
</dbReference>
<dbReference type="PANTHER" id="PTHR24095:SF14">
    <property type="entry name" value="ACETYL-COENZYME A SYNTHETASE 1"/>
    <property type="match status" value="1"/>
</dbReference>
<dbReference type="Pfam" id="PF16177">
    <property type="entry name" value="ACAS_N"/>
    <property type="match status" value="1"/>
</dbReference>
<dbReference type="Pfam" id="PF00501">
    <property type="entry name" value="AMP-binding"/>
    <property type="match status" value="1"/>
</dbReference>
<dbReference type="Pfam" id="PF13193">
    <property type="entry name" value="AMP-binding_C"/>
    <property type="match status" value="1"/>
</dbReference>
<dbReference type="SUPFAM" id="SSF56801">
    <property type="entry name" value="Acetyl-CoA synthetase-like"/>
    <property type="match status" value="1"/>
</dbReference>
<dbReference type="PROSITE" id="PS00455">
    <property type="entry name" value="AMP_BINDING"/>
    <property type="match status" value="1"/>
</dbReference>
<evidence type="ECO:0000255" key="1">
    <source>
        <dbReference type="HAMAP-Rule" id="MF_01123"/>
    </source>
</evidence>
<comment type="function">
    <text evidence="1">Catalyzes the conversion of acetate into acetyl-CoA (AcCoA), an essential intermediate at the junction of anabolic and catabolic pathways. AcsA undergoes a two-step reaction. In the first half reaction, AcsA combines acetate with ATP to form acetyl-adenylate (AcAMP) intermediate. In the second half reaction, it can then transfer the acetyl group from AcAMP to the sulfhydryl group of CoA, forming the product AcCoA.</text>
</comment>
<comment type="catalytic activity">
    <reaction evidence="1">
        <text>acetate + ATP + CoA = acetyl-CoA + AMP + diphosphate</text>
        <dbReference type="Rhea" id="RHEA:23176"/>
        <dbReference type="ChEBI" id="CHEBI:30089"/>
        <dbReference type="ChEBI" id="CHEBI:30616"/>
        <dbReference type="ChEBI" id="CHEBI:33019"/>
        <dbReference type="ChEBI" id="CHEBI:57287"/>
        <dbReference type="ChEBI" id="CHEBI:57288"/>
        <dbReference type="ChEBI" id="CHEBI:456215"/>
        <dbReference type="EC" id="6.2.1.1"/>
    </reaction>
</comment>
<comment type="cofactor">
    <cofactor evidence="1">
        <name>Mg(2+)</name>
        <dbReference type="ChEBI" id="CHEBI:18420"/>
    </cofactor>
</comment>
<comment type="PTM">
    <text evidence="1">Acetylated. Deacetylation by the SIR2-homolog deacetylase activates the enzyme.</text>
</comment>
<comment type="similarity">
    <text evidence="1">Belongs to the ATP-dependent AMP-binding enzyme family.</text>
</comment>
<name>ACSA_RHIE6</name>
<sequence>MSDKIHPVPKQVKAQALIDKEKYLKWYEESVENPDKFWGKHGKRIDWFKPYTKVKNTSFTGKVSIKWFEDGQTNVSYNCIDRHLKTNGDQVAIIWEGDNPYIDKKITYNELYEHVCRMANVLKKHGVKKGDRVTIYMPMIPEAAYAMLACARIGAVHSVVFGGFSPEALAGRIVDCESTFVITCDEGLRGGKPVPLKDNTDTAIHIAARQHVHVSKVLVVRRTGGKTGWAPGRDLWYHQEVATVKAECPPVKMKAEDPLFILYTSGSTGKPKGVLHTTGGYLVYASMTHEYVFDYHHGDIYWCTADVGWVTGHSYIVYGPLANCATTLMFEGVPNFPDQGRFWEVIDKHKVNIFYTAPTAIRSLMGAGDDFVTRSSRSSLRLLGTVGEPINPEAWEWYYNVVGDKRCPVIDTWWQTETGGHMITPLPGAIDLKPGSATVPFFGVKPQLVDNEGKVLEGAADGNLCITDSWPGQMRTVYGDHERFIQTYFSTYKGKYFTGDGCRRDEDGYYWITGRVDDVLNVSGHRLGTAEVESALVSHNLVSEAAVVGYPHAIKGQGIYCYVTLMAGHEGTDTLRQELVKHVRAEIGPIASPDKIQFAPGLPKTRSGKIMRRILRKIAEDDFGALGDTSTLADPAVVDDLIANRQNKATA</sequence>
<proteinExistence type="inferred from homology"/>
<organism>
    <name type="scientific">Rhizobium etli (strain CIAT 652)</name>
    <dbReference type="NCBI Taxonomy" id="491916"/>
    <lineage>
        <taxon>Bacteria</taxon>
        <taxon>Pseudomonadati</taxon>
        <taxon>Pseudomonadota</taxon>
        <taxon>Alphaproteobacteria</taxon>
        <taxon>Hyphomicrobiales</taxon>
        <taxon>Rhizobiaceae</taxon>
        <taxon>Rhizobium/Agrobacterium group</taxon>
        <taxon>Rhizobium</taxon>
    </lineage>
</organism>
<gene>
    <name evidence="1" type="primary">acsA</name>
    <name type="ordered locus">RHECIAT_CH0004404</name>
</gene>